<organismHost>
    <name type="scientific">Homo sapiens</name>
    <name type="common">Human</name>
    <dbReference type="NCBI Taxonomy" id="9606"/>
</organismHost>
<comment type="function">
    <text evidence="1">Enhances virion budding by targeting host CD4 and Tetherin/BST2 to proteasome degradation. Degradation of CD4 prevents any unwanted premature interactions between viral Env and its host receptor CD4 in the endoplasmic reticulum. Degradation of antiretroviral protein Tetherin/BST2 is important for virion budding, as BST2 tethers new viral particles to the host cell membrane. Mechanistically, Vpu bridges either CD4 or BST2 to BTRC, a substrate recognition subunit of the Skp1/Cullin/F-box protein E3 ubiquitin ligase, induces their ubiquitination and subsequent proteasomal degradation. The alteration of the E3 ligase specificity by Vpu seems to promote the degradation of host IKBKB, leading to NF-kappa-B down-regulation and subsequent apoptosis. Acts as a viroporin that forms an oligomeric ion channel in membranes. Modulates the host DNA repair mechanisms to promote degradation of nuclear viral cDNA in cells that are already productively infected in order to suppress immune sensing and proviral hyper-integration (superinfection). Manipulates PML-NBs and modulates SUMOylation of host BLM protein thereby enhancing its DNA-end processing activity toward viral unintegrated linear DNA. Also inhibits RAD52-mediated homologous repair of viral cDNA, preventing the generation of dead-end circular forms of single copies of the long terminal repeat and permitting sustained nucleolytic attack.</text>
</comment>
<comment type="activity regulation">
    <text evidence="1">Ion channel activity is inhibited by hexamethylene amiloride in vitro.</text>
</comment>
<comment type="subunit">
    <text evidence="1">Homopentamer. Interacts with host CD4 and BRTC; these interactions induce proteasomal degradation of CD4. Interacts with host BST2; this interaction leads to the degradation of host BST2. Interacts with host FBXW11. Interacts with host AP1M1; this interaction plays a role in the mistrafficking and subsequent degradation of host BST2. Interacts with host RANBP2; this interaction allows Vpu to down-regulate host BLM sumoylation.</text>
</comment>
<comment type="subcellular location">
    <subcellularLocation>
        <location evidence="1">Host membrane</location>
        <topology evidence="1">Single-pass type I membrane protein</topology>
    </subcellularLocation>
</comment>
<comment type="domain">
    <text evidence="1">The N-terminus and transmembrane domains are required for self-oligomerization and proper virion budding, whereas the cytoplasmic domain is required for CD4 degradation. The cytoplasmic domain is composed of 2 amphipathic alpha helix that form a U-shape. The N-terminal and transmembrane domains are required for proper virion budding, whereas the cytoplasmic domain is required for CD4 degradation. The cytoplasmic domain is composed of 2 amphipathic alpha helix.</text>
</comment>
<comment type="PTM">
    <text evidence="1">Phosphorylated by host CK2. This phosphorylation is necessary for interaction with human BTRC and degradation of CD4.</text>
</comment>
<comment type="miscellaneous">
    <text evidence="1">HIV-1 lineages are divided in three main groups, M (for Major), O (for Outlier), and N (for New, or Non-M, Non-O). The vast majority of strains found worldwide belong to the group M. Group O seems to be endemic to and largely confined to Cameroon and neighboring countries in West Central Africa, where these viruses represent a small minority of HIV-1 strains. The group N is represented by a limited number of isolates from Cameroonian persons. The group M is further subdivided in 9 clades or subtypes (A to D, F to H, J and K).</text>
</comment>
<comment type="similarity">
    <text evidence="1">Belongs to the HIV-1 VPU protein family.</text>
</comment>
<evidence type="ECO:0000255" key="1">
    <source>
        <dbReference type="HAMAP-Rule" id="MF_04082"/>
    </source>
</evidence>
<feature type="chain" id="PRO_0000244328" description="Protein Vpu">
    <location>
        <begin position="1"/>
        <end position="81"/>
    </location>
</feature>
<feature type="topological domain" description="Extracellular" evidence="1">
    <location>
        <begin position="1"/>
        <end position="7"/>
    </location>
</feature>
<feature type="transmembrane region" description="Helical" evidence="1">
    <location>
        <begin position="8"/>
        <end position="28"/>
    </location>
</feature>
<feature type="topological domain" description="Cytoplasmic" evidence="1">
    <location>
        <begin position="29"/>
        <end position="81"/>
    </location>
</feature>
<feature type="modified residue" description="Phosphoserine; by host CK2" evidence="1">
    <location>
        <position position="53"/>
    </location>
</feature>
<feature type="modified residue" description="Phosphoserine; by host CK2" evidence="1">
    <location>
        <position position="57"/>
    </location>
</feature>
<reference key="1">
    <citation type="journal article" date="2000" name="Virology">
        <title>Virtually full-length subtype F and F/D recombinant HIV-1 from Africa and South America.</title>
        <authorList>
            <person name="Laukkanen T."/>
            <person name="Carr J.K."/>
            <person name="Janssens W."/>
            <person name="Liitsola K."/>
            <person name="Gotte D."/>
            <person name="McCutchan F.E."/>
            <person name="Op de Coul E."/>
            <person name="Cornelissen M."/>
            <person name="Heyndrickx L."/>
            <person name="van der Groen G."/>
            <person name="Salminen M.O."/>
        </authorList>
    </citation>
    <scope>NUCLEOTIDE SEQUENCE [GENOMIC DNA]</scope>
</reference>
<protein>
    <recommendedName>
        <fullName evidence="1">Protein Vpu</fullName>
    </recommendedName>
    <alternativeName>
        <fullName evidence="1">U ORF protein</fullName>
    </alternativeName>
    <alternativeName>
        <fullName evidence="1">Viral protein U</fullName>
    </alternativeName>
</protein>
<accession>Q9QSQ8</accession>
<keyword id="KW-0014">AIDS</keyword>
<keyword id="KW-0053">Apoptosis</keyword>
<keyword id="KW-1043">Host membrane</keyword>
<keyword id="KW-0945">Host-virus interaction</keyword>
<keyword id="KW-1090">Inhibition of host innate immune response by virus</keyword>
<keyword id="KW-1084">Inhibition of host tetherin by virus</keyword>
<keyword id="KW-0407">Ion channel</keyword>
<keyword id="KW-0406">Ion transport</keyword>
<keyword id="KW-0472">Membrane</keyword>
<keyword id="KW-0597">Phosphoprotein</keyword>
<keyword id="KW-1185">Reference proteome</keyword>
<keyword id="KW-0812">Transmembrane</keyword>
<keyword id="KW-1133">Transmembrane helix</keyword>
<keyword id="KW-0813">Transport</keyword>
<keyword id="KW-0899">Viral immunoevasion</keyword>
<dbReference type="EMBL" id="AF077336">
    <property type="protein sequence ID" value="AAD46093.1"/>
    <property type="molecule type" value="Genomic_DNA"/>
</dbReference>
<dbReference type="Proteomes" id="UP000007418">
    <property type="component" value="Segment"/>
</dbReference>
<dbReference type="GO" id="GO:0033644">
    <property type="term" value="C:host cell membrane"/>
    <property type="evidence" value="ECO:0007669"/>
    <property type="project" value="UniProtKB-SubCell"/>
</dbReference>
<dbReference type="GO" id="GO:0016020">
    <property type="term" value="C:membrane"/>
    <property type="evidence" value="ECO:0007669"/>
    <property type="project" value="UniProtKB-UniRule"/>
</dbReference>
<dbReference type="GO" id="GO:0042609">
    <property type="term" value="F:CD4 receptor binding"/>
    <property type="evidence" value="ECO:0007669"/>
    <property type="project" value="UniProtKB-UniRule"/>
</dbReference>
<dbReference type="GO" id="GO:0005261">
    <property type="term" value="F:monoatomic cation channel activity"/>
    <property type="evidence" value="ECO:0007669"/>
    <property type="project" value="UniProtKB-UniRule"/>
</dbReference>
<dbReference type="GO" id="GO:0032801">
    <property type="term" value="P:receptor catabolic process"/>
    <property type="evidence" value="ECO:0007669"/>
    <property type="project" value="UniProtKB-UniRule"/>
</dbReference>
<dbReference type="GO" id="GO:0052170">
    <property type="term" value="P:symbiont-mediated suppression of host innate immune response"/>
    <property type="evidence" value="ECO:0007669"/>
    <property type="project" value="UniProtKB-KW"/>
</dbReference>
<dbReference type="GO" id="GO:0039502">
    <property type="term" value="P:symbiont-mediated suppression of host type I interferon-mediated signaling pathway"/>
    <property type="evidence" value="ECO:0007669"/>
    <property type="project" value="UniProtKB-UniRule"/>
</dbReference>
<dbReference type="GO" id="GO:0039587">
    <property type="term" value="P:symbiont-mediated-mediated suppression of host tetherin activity"/>
    <property type="evidence" value="ECO:0007669"/>
    <property type="project" value="UniProtKB-UniRule"/>
</dbReference>
<dbReference type="GO" id="GO:0019076">
    <property type="term" value="P:viral release from host cell"/>
    <property type="evidence" value="ECO:0007669"/>
    <property type="project" value="UniProtKB-UniRule"/>
</dbReference>
<dbReference type="Gene3D" id="1.10.195.10">
    <property type="entry name" value="HIV-1 VPU cytoplasmic domain"/>
    <property type="match status" value="1"/>
</dbReference>
<dbReference type="HAMAP" id="MF_04082">
    <property type="entry name" value="HIV_VPU"/>
    <property type="match status" value="1"/>
</dbReference>
<dbReference type="InterPro" id="IPR008187">
    <property type="entry name" value="Vpu"/>
</dbReference>
<dbReference type="InterPro" id="IPR009032">
    <property type="entry name" value="Vpu_cyt_dom_sf"/>
</dbReference>
<dbReference type="Pfam" id="PF00558">
    <property type="entry name" value="Vpu"/>
    <property type="match status" value="1"/>
</dbReference>
<dbReference type="SUPFAM" id="SSF57647">
    <property type="entry name" value="HIV-1 VPU cytoplasmic domain"/>
    <property type="match status" value="1"/>
</dbReference>
<sequence>MSYLLAIGIAALIVALIIAIVVWTIVYIEYKKLVRQRKINKLYKRIRERAEDSGNESEGDAEELAALGEMGPFIPGDINNL</sequence>
<name>VPU_HV1VI</name>
<proteinExistence type="inferred from homology"/>
<organism>
    <name type="scientific">Human immunodeficiency virus type 1 group M subtype F1 (isolate VI850)</name>
    <name type="common">HIV-1</name>
    <dbReference type="NCBI Taxonomy" id="388813"/>
    <lineage>
        <taxon>Viruses</taxon>
        <taxon>Riboviria</taxon>
        <taxon>Pararnavirae</taxon>
        <taxon>Artverviricota</taxon>
        <taxon>Revtraviricetes</taxon>
        <taxon>Ortervirales</taxon>
        <taxon>Retroviridae</taxon>
        <taxon>Orthoretrovirinae</taxon>
        <taxon>Lentivirus</taxon>
        <taxon>Human immunodeficiency virus type 1</taxon>
    </lineage>
</organism>
<gene>
    <name evidence="1" type="primary">vpu</name>
</gene>